<evidence type="ECO:0000250" key="1">
    <source>
        <dbReference type="UniProtKB" id="Q6UEF2"/>
    </source>
</evidence>
<evidence type="ECO:0000269" key="2">
    <source>
    </source>
</evidence>
<evidence type="ECO:0000269" key="3">
    <source>
    </source>
</evidence>
<evidence type="ECO:0000269" key="4">
    <source>
    </source>
</evidence>
<evidence type="ECO:0000269" key="5">
    <source>
    </source>
</evidence>
<evidence type="ECO:0000303" key="6">
    <source>
    </source>
</evidence>
<evidence type="ECO:0000303" key="7">
    <source>
    </source>
</evidence>
<evidence type="ECO:0000305" key="8"/>
<evidence type="ECO:0000305" key="9">
    <source>
    </source>
</evidence>
<evidence type="ECO:0000305" key="10">
    <source>
    </source>
</evidence>
<evidence type="ECO:0000305" key="11">
    <source>
    </source>
</evidence>
<comment type="function">
    <text evidence="1 2 3 6 9 10 11">Oxidoreductase; part of the fragmented gene cluster that mediates the biosynthesis of dothistromin (DOTH), a polyketide toxin very similar in structure to the aflatoxin precursor, versicolorin B (PubMed:12039746, PubMed:17683963, PubMed:22069571, PubMed:23207690, PubMed:23448391). The first step of the pathway is the conversion of acetate to norsolorinic acid (NOR) and requires the fatty acid synthase subunits hexA and hexB, as well as the polyketide synthase pksA (PubMed:16649078, PubMed:23207690). PksA combines a hexanoyl starter unit and 7 malonyl-CoA extender units to synthesize the precursor NOR (By similarity). The hexanoyl starter unit is provided to the acyl-carrier protein (ACP) domain by the fungal fatty acid synthase hexA/hexB (By similarity). The second step is the conversion of NOR to averantin (AVN) and requires the norsolorinic acid ketoreductase nor1, which catalyzes the dehydration of norsolorinic acid to form (1'S)-averantin (PubMed:23207690). The cytochrome P450 monooxygenase avnA then catalyzes the hydroxylation of AVN to 5'hydroxyaverantin (HAVN) (PubMed:23207690). The next step is performed by adhA that transforms HAVN to averufin (AVF) (PubMed:23207690). Averufin might then be converted to hydroxyversicolorone by cypX and avfA (PubMed:23207690). Hydroxyversicolorone is further converted versiconal hemiacetal acetate (VHA) by moxY (PubMed:23207690). VHA is then the substrate for the versiconal hemiacetal acetate esterase est1 to yield versiconal (VAL) (PubMed:23207690). Versicolorin B synthase vbsA then converts VAL to versicolorin B (VERB) by closing the bisfuran ring (PubMed:16649078, PubMed:23207690). Then, the activity of the versicolorin B desaturase verB leads to versicolorin A (VERA) (PubMed:23207690). DotB, a predicted chloroperoxidase, may perform epoxidation of the A-ring of VERA (PubMed:23207690). Alternatively, a cytochrome P450, such as cypX or avnA could catalyze this step (PubMed:23207690). It is also possible that another, uncharacterized, cytochrome P450 enzyme is responsible for this step (PubMed:23207690). Opening of the epoxide could potentially be achieved by the epoxide hydrolase epoA (PubMed:23207690). However, epoA seems not to be required for DOTH biosynthesis, but other epoxide hydrolases may have the ability to complement this hydrolysis (PubMed:23207690). Alternatively, opening of the epoxide ring could be achieved non-enzymatically (PubMed:23207690). The next step is the deoxygenation of ring A to yield the 5,8-dihydroxyanthraquinone which is most likely catalyzed by the NADPH dehydrogenase encoded by ver1 (PubMed:23207690). The last stages of DOTH biosynthesis are proposed to involve hydroxylation of the bisfuran (PubMed:23207690). OrdB and norB might have oxidative roles here (PubMed:23207690). An alternative possibility is that cytochrome P450 monoogenases such as avnA and cypX might perform these steps in addition to previously proposed steps (PubMed:23207690).</text>
</comment>
<comment type="pathway">
    <text evidence="6 10">Mycotoxin biosynthesis.</text>
</comment>
<comment type="induction">
    <text evidence="4 5">Expression is positively regulated by the dothistromin-specific transcription factors aflR and aflJ (PubMed:23207690, PubMed:25986547).</text>
</comment>
<comment type="similarity">
    <text evidence="8">Belongs to the avfA family.</text>
</comment>
<proteinExistence type="evidence at transcript level"/>
<keyword id="KW-0503">Monooxygenase</keyword>
<keyword id="KW-0560">Oxidoreductase</keyword>
<keyword id="KW-1185">Reference proteome</keyword>
<accession>M2WJ74</accession>
<gene>
    <name evidence="7" type="primary">ordB</name>
    <name type="ORF">DOTSEDRAFT_75648</name>
</gene>
<reference key="1">
    <citation type="journal article" date="2012" name="PLoS Genet.">
        <title>The genomes of the fungal plant pathogens Cladosporium fulvum and Dothistroma septosporum reveal adaptation to different hosts and lifestyles but also signatures of common ancestry.</title>
        <authorList>
            <person name="de Wit P.J.G.M."/>
            <person name="van der Burgt A."/>
            <person name="Oekmen B."/>
            <person name="Stergiopoulos I."/>
            <person name="Abd-Elsalam K.A."/>
            <person name="Aerts A.L."/>
            <person name="Bahkali A.H."/>
            <person name="Beenen H.G."/>
            <person name="Chettri P."/>
            <person name="Cox M.P."/>
            <person name="Datema E."/>
            <person name="de Vries R.P."/>
            <person name="Dhillon B."/>
            <person name="Ganley A.R."/>
            <person name="Griffiths S.A."/>
            <person name="Guo Y."/>
            <person name="Hamelin R.C."/>
            <person name="Henrissat B."/>
            <person name="Kabir M.S."/>
            <person name="Jashni M.K."/>
            <person name="Kema G."/>
            <person name="Klaubauf S."/>
            <person name="Lapidus A."/>
            <person name="Levasseur A."/>
            <person name="Lindquist E."/>
            <person name="Mehrabi R."/>
            <person name="Ohm R.A."/>
            <person name="Owen T.J."/>
            <person name="Salamov A."/>
            <person name="Schwelm A."/>
            <person name="Schijlen E."/>
            <person name="Sun H."/>
            <person name="van den Burg H.A."/>
            <person name="van Ham R.C.H.J."/>
            <person name="Zhang S."/>
            <person name="Goodwin S.B."/>
            <person name="Grigoriev I.V."/>
            <person name="Collemare J."/>
            <person name="Bradshaw R.E."/>
        </authorList>
    </citation>
    <scope>NUCLEOTIDE SEQUENCE [LARGE SCALE GENOMIC DNA]</scope>
    <source>
        <strain>NZE10 / CBS 128990</strain>
    </source>
</reference>
<reference key="2">
    <citation type="journal article" date="2012" name="PLoS Pathog.">
        <title>Diverse lifestyles and strategies of plant pathogenesis encoded in the genomes of eighteen Dothideomycetes fungi.</title>
        <authorList>
            <person name="Ohm R.A."/>
            <person name="Feau N."/>
            <person name="Henrissat B."/>
            <person name="Schoch C.L."/>
            <person name="Horwitz B.A."/>
            <person name="Barry K.W."/>
            <person name="Condon B.J."/>
            <person name="Copeland A.C."/>
            <person name="Dhillon B."/>
            <person name="Glaser F."/>
            <person name="Hesse C.N."/>
            <person name="Kosti I."/>
            <person name="LaButti K."/>
            <person name="Lindquist E.A."/>
            <person name="Lucas S."/>
            <person name="Salamov A.A."/>
            <person name="Bradshaw R.E."/>
            <person name="Ciuffetti L."/>
            <person name="Hamelin R.C."/>
            <person name="Kema G.H.J."/>
            <person name="Lawrence C."/>
            <person name="Scott J.A."/>
            <person name="Spatafora J.W."/>
            <person name="Turgeon B.G."/>
            <person name="de Wit P.J.G.M."/>
            <person name="Zhong S."/>
            <person name="Goodwin S.B."/>
            <person name="Grigoriev I.V."/>
        </authorList>
    </citation>
    <scope>NUCLEOTIDE SEQUENCE [LARGE SCALE GENOMIC DNA]</scope>
    <source>
        <strain>NZE10 / CBS 128990</strain>
    </source>
</reference>
<reference key="3">
    <citation type="journal article" date="2002" name="Appl. Environ. Microbiol.">
        <title>Dothistroma pini, a forest pathogen, contains homologs of aflatoxin biosynthetic pathway genes.</title>
        <authorList>
            <person name="Bradshaw R.E."/>
            <person name="Bhatnagar D."/>
            <person name="Ganley R.J."/>
            <person name="Gillman C.J."/>
            <person name="Monahan B.J."/>
            <person name="Seconi J.M."/>
        </authorList>
    </citation>
    <scope>FUNCTION</scope>
</reference>
<reference key="4">
    <citation type="journal article" date="2006" name="Mycopathologia">
        <title>A polyketide synthase gene required for biosynthesis of the aflatoxin-like toxin, dothistromin.</title>
        <authorList>
            <person name="Bradshaw R.E."/>
            <person name="Jin H."/>
            <person name="Morgan B.S."/>
            <person name="Schwelm A."/>
            <person name="Teddy O.R."/>
            <person name="Young C.A."/>
            <person name="Zhang S."/>
        </authorList>
    </citation>
    <scope>FUNCTION</scope>
</reference>
<reference key="5">
    <citation type="journal article" date="2007" name="Fungal Genet. Biol.">
        <title>A fragmented aflatoxin-like gene cluster in the forest pathogen Dothistroma septosporum.</title>
        <authorList>
            <person name="Zhang S."/>
            <person name="Schwelm A."/>
            <person name="Jin H."/>
            <person name="Collins L.J."/>
            <person name="Bradshaw R.E."/>
        </authorList>
    </citation>
    <scope>FUNCTION</scope>
</reference>
<reference key="6">
    <citation type="journal article" date="2010" name="Toxins">
        <title>Genetics of dothistromin biosynthesis of Dothistroma septosporum: an update.</title>
        <authorList>
            <person name="Schwelm A."/>
            <person name="Bradshaw R.E."/>
        </authorList>
    </citation>
    <scope>REVIEW ON FUNCTION</scope>
    <scope>PATHWAY</scope>
</reference>
<reference key="7">
    <citation type="journal article" date="2013" name="Fungal Genet. Biol.">
        <title>Dothistromin genes at multiple separate loci are regulated by AflR.</title>
        <authorList>
            <person name="Chettri P."/>
            <person name="Ehrlich K.C."/>
            <person name="Cary J.W."/>
            <person name="Collemare J."/>
            <person name="Cox M.P."/>
            <person name="Griffiths S.A."/>
            <person name="Olson M.A."/>
            <person name="de Wit P.J."/>
            <person name="Bradshaw R.E."/>
        </authorList>
    </citation>
    <scope>FUNCTION</scope>
    <scope>INDUCTION</scope>
    <scope>PATHWAY</scope>
</reference>
<reference key="8">
    <citation type="journal article" date="2013" name="New Phytol.">
        <title>Fragmentation of an aflatoxin-like gene cluster in a forest pathogen.</title>
        <authorList>
            <person name="Bradshaw R.E."/>
            <person name="Slot J.C."/>
            <person name="Moore G.G."/>
            <person name="Chettri P."/>
            <person name="de Wit P.J."/>
            <person name="Ehrlich K.C."/>
            <person name="Ganley A.R."/>
            <person name="Olson M.A."/>
            <person name="Rokas A."/>
            <person name="Carbone I."/>
            <person name="Cox M.P."/>
        </authorList>
    </citation>
    <scope>FUNCTION</scope>
</reference>
<reference key="9">
    <citation type="journal article" date="2015" name="Fungal Biol.">
        <title>Regulation of the aflatoxin-like toxin dothistromin by AflJ.</title>
        <authorList>
            <person name="Chettri P."/>
            <person name="Ehrlich K.C."/>
            <person name="Bradshaw R.E."/>
        </authorList>
    </citation>
    <scope>INDUCTION</scope>
</reference>
<dbReference type="EC" id="1.-.-.-" evidence="10"/>
<dbReference type="EMBL" id="KB446546">
    <property type="protein sequence ID" value="EME39028.1"/>
    <property type="molecule type" value="Genomic_DNA"/>
</dbReference>
<dbReference type="SMR" id="M2WJ74"/>
<dbReference type="STRING" id="675120.M2WJ74"/>
<dbReference type="EnsemblFungi" id="EME39028">
    <property type="protein sequence ID" value="EME39028"/>
    <property type="gene ID" value="DOTSEDRAFT_75648"/>
</dbReference>
<dbReference type="eggNOG" id="ENOG502SM0C">
    <property type="taxonomic scope" value="Eukaryota"/>
</dbReference>
<dbReference type="HOGENOM" id="CLU_090039_1_0_1"/>
<dbReference type="OMA" id="AERHWIS"/>
<dbReference type="OrthoDB" id="10254221at2759"/>
<dbReference type="Proteomes" id="UP000016933">
    <property type="component" value="Unassembled WGS sequence"/>
</dbReference>
<dbReference type="GO" id="GO:0004497">
    <property type="term" value="F:monooxygenase activity"/>
    <property type="evidence" value="ECO:0007669"/>
    <property type="project" value="UniProtKB-KW"/>
</dbReference>
<dbReference type="Gene3D" id="3.40.50.720">
    <property type="entry name" value="NAD(P)-binding Rossmann-like Domain"/>
    <property type="match status" value="1"/>
</dbReference>
<dbReference type="InterPro" id="IPR016040">
    <property type="entry name" value="NAD(P)-bd_dom"/>
</dbReference>
<dbReference type="InterPro" id="IPR036291">
    <property type="entry name" value="NAD(P)-bd_dom_sf"/>
</dbReference>
<dbReference type="PANTHER" id="PTHR15020">
    <property type="entry name" value="FLAVIN REDUCTASE-RELATED"/>
    <property type="match status" value="1"/>
</dbReference>
<dbReference type="PANTHER" id="PTHR15020:SF50">
    <property type="entry name" value="UPF0659 PROTEIN YMR090W"/>
    <property type="match status" value="1"/>
</dbReference>
<dbReference type="Pfam" id="PF13460">
    <property type="entry name" value="NAD_binding_10"/>
    <property type="match status" value="1"/>
</dbReference>
<dbReference type="SUPFAM" id="SSF51735">
    <property type="entry name" value="NAD(P)-binding Rossmann-fold domains"/>
    <property type="match status" value="1"/>
</dbReference>
<sequence>MASYAVLGATGNTGQALINILLQSPEKKIHAYCRSKQKLLRLTPQLAGNKNVKVFEGSLNDTAVIADCIRGSRAVFLAVAVPDNMPGMTIAQDTARVTVNALQRIRAENEKAILPKVIVLSSAKLDDKLCQNMPNAMKVLVKLATSNQCADLKESQRILTAERHWISSTFMMPGGLVQDAQKGHALSLETEKTPLSYLDLAAGMVEVADAEDEYHMKNVSVIPTGTGVKFPYESLLEVVKGLLAHYFPWTYRYTGAMPMPVLPQKTA</sequence>
<organism>
    <name type="scientific">Dothistroma septosporum (strain NZE10 / CBS 128990)</name>
    <name type="common">Red band needle blight fungus</name>
    <name type="synonym">Mycosphaerella pini</name>
    <dbReference type="NCBI Taxonomy" id="675120"/>
    <lineage>
        <taxon>Eukaryota</taxon>
        <taxon>Fungi</taxon>
        <taxon>Dikarya</taxon>
        <taxon>Ascomycota</taxon>
        <taxon>Pezizomycotina</taxon>
        <taxon>Dothideomycetes</taxon>
        <taxon>Dothideomycetidae</taxon>
        <taxon>Mycosphaerellales</taxon>
        <taxon>Mycosphaerellaceae</taxon>
        <taxon>Dothistroma</taxon>
    </lineage>
</organism>
<feature type="chain" id="PRO_0000443472" description="Oxidoreductase ordB">
    <location>
        <begin position="1"/>
        <end position="267"/>
    </location>
</feature>
<name>ORDB_DOTSN</name>
<protein>
    <recommendedName>
        <fullName evidence="7">Oxidoreductase ordB</fullName>
        <ecNumber evidence="10">1.-.-.-</ecNumber>
    </recommendedName>
    <alternativeName>
        <fullName evidence="7">Dothistromin biosynthesis protein ordrB</fullName>
    </alternativeName>
</protein>